<dbReference type="EMBL" id="CP017623">
    <property type="protein sequence ID" value="AOW26038.1"/>
    <property type="molecule type" value="Genomic_DNA"/>
</dbReference>
<dbReference type="RefSeq" id="XP_721558.1">
    <property type="nucleotide sequence ID" value="XM_716465.1"/>
</dbReference>
<dbReference type="SMR" id="Q5AHZ2"/>
<dbReference type="FunCoup" id="Q5AHZ2">
    <property type="interactions" value="170"/>
</dbReference>
<dbReference type="STRING" id="237561.Q5AHZ2"/>
<dbReference type="EnsemblFungi" id="C1_03600W_A-T">
    <property type="protein sequence ID" value="C1_03600W_A-T-p1"/>
    <property type="gene ID" value="C1_03600W_A"/>
</dbReference>
<dbReference type="GeneID" id="3636880"/>
<dbReference type="KEGG" id="cal:CAALFM_C103600WA"/>
<dbReference type="CGD" id="CAL0000178850">
    <property type="gene designation" value="orf19.10578"/>
</dbReference>
<dbReference type="VEuPathDB" id="FungiDB:C1_03600W_A"/>
<dbReference type="eggNOG" id="KOG2447">
    <property type="taxonomic scope" value="Eukaryota"/>
</dbReference>
<dbReference type="HOGENOM" id="CLU_079423_1_0_1"/>
<dbReference type="InParanoid" id="Q5AHZ2"/>
<dbReference type="OMA" id="SIVTHYV"/>
<dbReference type="OrthoDB" id="432292at2759"/>
<dbReference type="UniPathway" id="UPA00378"/>
<dbReference type="PHI-base" id="PHI:4890"/>
<dbReference type="Proteomes" id="UP000000559">
    <property type="component" value="Chromosome 1"/>
</dbReference>
<dbReference type="GO" id="GO:0008250">
    <property type="term" value="C:oligosaccharyltransferase complex"/>
    <property type="evidence" value="ECO:0007669"/>
    <property type="project" value="InterPro"/>
</dbReference>
<dbReference type="GO" id="GO:0006486">
    <property type="term" value="P:protein glycosylation"/>
    <property type="evidence" value="ECO:0007669"/>
    <property type="project" value="UniProtKB-UniPathway"/>
</dbReference>
<dbReference type="InterPro" id="IPR056790">
    <property type="entry name" value="Ribophorin_II_C"/>
</dbReference>
<dbReference type="InterPro" id="IPR008814">
    <property type="entry name" value="Swp1"/>
</dbReference>
<dbReference type="PANTHER" id="PTHR12640:SF0">
    <property type="entry name" value="DOLICHYL-DIPHOSPHOOLIGOSACCHARIDE--PROTEIN GLYCOSYLTRANSFERASE SUBUNIT 2"/>
    <property type="match status" value="1"/>
</dbReference>
<dbReference type="PANTHER" id="PTHR12640">
    <property type="entry name" value="RIBOPHORIN II"/>
    <property type="match status" value="1"/>
</dbReference>
<dbReference type="Pfam" id="PF25147">
    <property type="entry name" value="Ribophorin_II_C"/>
    <property type="match status" value="1"/>
</dbReference>
<feature type="signal peptide" evidence="2">
    <location>
        <begin position="1"/>
        <end position="18"/>
    </location>
</feature>
<feature type="chain" id="PRO_5019610021" description="Dolichyl-diphosphooligosaccharide--protein glycosyltransferase subunit delta">
    <location>
        <begin position="19"/>
        <end position="275"/>
    </location>
</feature>
<feature type="transmembrane region" description="Helical" evidence="2">
    <location>
        <begin position="179"/>
        <end position="199"/>
    </location>
</feature>
<feature type="transmembrane region" description="Helical" evidence="2">
    <location>
        <begin position="214"/>
        <end position="234"/>
    </location>
</feature>
<feature type="transmembrane region" description="Helical" evidence="2">
    <location>
        <begin position="241"/>
        <end position="261"/>
    </location>
</feature>
<protein>
    <recommendedName>
        <fullName evidence="1">Dolichyl-diphosphooligosaccharide--protein glycosyltransferase subunit delta</fullName>
        <shortName evidence="1">Oligosaccharyl transferase subunit delta</shortName>
    </recommendedName>
</protein>
<reference key="1">
    <citation type="journal article" date="2004" name="Proc. Natl. Acad. Sci. U.S.A.">
        <title>The diploid genome sequence of Candida albicans.</title>
        <authorList>
            <person name="Jones T."/>
            <person name="Federspiel N.A."/>
            <person name="Chibana H."/>
            <person name="Dungan J."/>
            <person name="Kalman S."/>
            <person name="Magee B.B."/>
            <person name="Newport G."/>
            <person name="Thorstenson Y.R."/>
            <person name="Agabian N."/>
            <person name="Magee P.T."/>
            <person name="Davis R.W."/>
            <person name="Scherer S."/>
        </authorList>
    </citation>
    <scope>NUCLEOTIDE SEQUENCE [LARGE SCALE GENOMIC DNA]</scope>
    <source>
        <strain>SC5314 / ATCC MYA-2876</strain>
    </source>
</reference>
<reference key="2">
    <citation type="journal article" date="2007" name="Genome Biol.">
        <title>Assembly of the Candida albicans genome into sixteen supercontigs aligned on the eight chromosomes.</title>
        <authorList>
            <person name="van het Hoog M."/>
            <person name="Rast T.J."/>
            <person name="Martchenko M."/>
            <person name="Grindle S."/>
            <person name="Dignard D."/>
            <person name="Hogues H."/>
            <person name="Cuomo C."/>
            <person name="Berriman M."/>
            <person name="Scherer S."/>
            <person name="Magee B.B."/>
            <person name="Whiteway M."/>
            <person name="Chibana H."/>
            <person name="Nantel A."/>
            <person name="Magee P.T."/>
        </authorList>
    </citation>
    <scope>GENOME REANNOTATION</scope>
    <source>
        <strain>SC5314 / ATCC MYA-2876</strain>
    </source>
</reference>
<reference key="3">
    <citation type="journal article" date="2013" name="Genome Biol.">
        <title>Assembly of a phased diploid Candida albicans genome facilitates allele-specific measurements and provides a simple model for repeat and indel structure.</title>
        <authorList>
            <person name="Muzzey D."/>
            <person name="Schwartz K."/>
            <person name="Weissman J.S."/>
            <person name="Sherlock G."/>
        </authorList>
    </citation>
    <scope>NUCLEOTIDE SEQUENCE [LARGE SCALE GENOMIC DNA]</scope>
    <scope>GENOME REANNOTATION</scope>
    <source>
        <strain>SC5314 / ATCC MYA-2876</strain>
    </source>
</reference>
<reference key="4">
    <citation type="journal article" date="2012" name="Cell">
        <title>A recently evolved transcriptional network controls biofilm development in Candida albicans.</title>
        <authorList>
            <person name="Nobile C.J."/>
            <person name="Fox E.P."/>
            <person name="Nett J.E."/>
            <person name="Sorrells T.R."/>
            <person name="Mitrovich Q.M."/>
            <person name="Hernday A.D."/>
            <person name="Tuch B.B."/>
            <person name="Andes D.R."/>
            <person name="Johnson A.D."/>
        </authorList>
    </citation>
    <scope>INDUCTION</scope>
</reference>
<reference key="5">
    <citation type="journal article" date="2015" name="J. Proteomics">
        <title>Candida albicans cell shaving uncovers new proteins involved in cell wall integrity, yeast to hypha transition, stress response and host-pathogen interaction.</title>
        <authorList>
            <person name="Gil-Bona A."/>
            <person name="Parra-Giraldo C.M."/>
            <person name="Hernaez M.L."/>
            <person name="Reales-Calderon J.A."/>
            <person name="Solis N.V."/>
            <person name="Filler S.G."/>
            <person name="Monteoliva L."/>
            <person name="Gil C."/>
        </authorList>
    </citation>
    <scope>FUNCTION</scope>
    <scope>DISRUPTION PHENOTYPE</scope>
</reference>
<keyword id="KW-0256">Endoplasmic reticulum</keyword>
<keyword id="KW-0472">Membrane</keyword>
<keyword id="KW-1185">Reference proteome</keyword>
<keyword id="KW-0732">Signal</keyword>
<keyword id="KW-0812">Transmembrane</keyword>
<keyword id="KW-1133">Transmembrane helix</keyword>
<keyword id="KW-0843">Virulence</keyword>
<evidence type="ECO:0000250" key="1">
    <source>
        <dbReference type="UniProtKB" id="Q02795"/>
    </source>
</evidence>
<evidence type="ECO:0000255" key="2"/>
<evidence type="ECO:0000269" key="3">
    <source>
    </source>
</evidence>
<evidence type="ECO:0000269" key="4">
    <source>
    </source>
</evidence>
<evidence type="ECO:0000305" key="5"/>
<organism>
    <name type="scientific">Candida albicans (strain SC5314 / ATCC MYA-2876)</name>
    <name type="common">Yeast</name>
    <dbReference type="NCBI Taxonomy" id="237561"/>
    <lineage>
        <taxon>Eukaryota</taxon>
        <taxon>Fungi</taxon>
        <taxon>Dikarya</taxon>
        <taxon>Ascomycota</taxon>
        <taxon>Saccharomycotina</taxon>
        <taxon>Pichiomycetes</taxon>
        <taxon>Debaryomycetaceae</taxon>
        <taxon>Candida/Lodderomyces clade</taxon>
        <taxon>Candida</taxon>
    </lineage>
</organism>
<sequence length="275" mass="30905">MKTSVFIAIFNLLVCALAYTDLTGSIKINDKKITLGEFNTQEVKQLTINSPKDIIEIDLKSKDIKGKPEQIMVSLADVKNPAISTHYVPVVKESKIKLNIKALSIPEVLKTKDKLVLTIVIADSKSKNNMIRRLVEVLPSPEFKSTSRYQAKPRIGIQPEIHHIFREDERTVNPIVPVVFIIAAFTLLLGLFGSWVGFIGIDNLFRTFKTISKVQLLHNVSFLISVLGFELNFVKYYLGQSIFTTLFYGFILSIPCVYFGVSVLRSLAKNRALGK</sequence>
<gene>
    <name type="ordered locus">CAALFM_C103600WA</name>
    <name type="ordered locus">orf19.10578</name>
</gene>
<comment type="function">
    <text evidence="1 4">Subunit of the oligosaccharyl transferase (OST) complex that catalyzes the initial transfer of a defined glycan (Glc(3)Man(9)GlcNAc(2) in eukaryotes) from the lipid carrier dolichol-pyrophosphate to an asparagine residue within an Asn-X-Ser/Thr consensus motif in nascent polypeptide chains, the first step in protein N-glycosylation. N-glycosylation occurs cotranslationally and the complex associates with the Sec61 complex at the channel-forming translocon complex that mediates protein translocation across the endoplasmic reticulum (ER). All subunits are required for a maximal enzyme activity (By similarity). Plays a role in cell wall integrity and in engulfment by macrophages (PubMed:26087349).</text>
</comment>
<comment type="pathway">
    <text evidence="1">Protein modification; protein glycosylation.</text>
</comment>
<comment type="subunit">
    <text evidence="1">Component of the oligosaccharyltransferase (OST) complex.</text>
</comment>
<comment type="subcellular location">
    <subcellularLocation>
        <location evidence="1">Endoplasmic reticulum membrane</location>
        <topology evidence="1">Multi-pass membrane protein</topology>
    </subcellularLocation>
</comment>
<comment type="induction">
    <text evidence="3">Expression is down-regulated during biofilm formation.</text>
</comment>
<comment type="disruption phenotype">
    <text evidence="4">Leads to sensitivity to both cell wall-damaging agents calcofluor white and Congo red, as well as to thermosensitivity (PubMed:26087349). Causes significantly more damage to the host macrophages (PubMed:26087349).</text>
</comment>
<comment type="similarity">
    <text evidence="5">Belongs to the SWP1 family.</text>
</comment>
<name>OSTD_CANAL</name>
<proteinExistence type="evidence at transcript level"/>
<accession>Q5AHZ2</accession>